<dbReference type="EC" id="2.7.2.11" evidence="1"/>
<dbReference type="EMBL" id="X53086">
    <property type="protein sequence ID" value="CAA37254.1"/>
    <property type="molecule type" value="Genomic_DNA"/>
</dbReference>
<dbReference type="EMBL" id="D90351">
    <property type="protein sequence ID" value="BAA14364.1"/>
    <property type="molecule type" value="Genomic_DNA"/>
</dbReference>
<dbReference type="PIR" id="A49753">
    <property type="entry name" value="KISEEM"/>
</dbReference>
<dbReference type="RefSeq" id="WP_047572529.1">
    <property type="nucleotide sequence ID" value="NZ_VTUT01000007.1"/>
</dbReference>
<dbReference type="SMR" id="P17856"/>
<dbReference type="STRING" id="273526.SMDB11_0224"/>
<dbReference type="UniPathway" id="UPA00098">
    <property type="reaction ID" value="UER00359"/>
</dbReference>
<dbReference type="GO" id="GO:0005829">
    <property type="term" value="C:cytosol"/>
    <property type="evidence" value="ECO:0007669"/>
    <property type="project" value="TreeGrafter"/>
</dbReference>
<dbReference type="GO" id="GO:0005524">
    <property type="term" value="F:ATP binding"/>
    <property type="evidence" value="ECO:0007669"/>
    <property type="project" value="UniProtKB-KW"/>
</dbReference>
<dbReference type="GO" id="GO:0004349">
    <property type="term" value="F:glutamate 5-kinase activity"/>
    <property type="evidence" value="ECO:0007669"/>
    <property type="project" value="UniProtKB-UniRule"/>
</dbReference>
<dbReference type="GO" id="GO:0003723">
    <property type="term" value="F:RNA binding"/>
    <property type="evidence" value="ECO:0007669"/>
    <property type="project" value="InterPro"/>
</dbReference>
<dbReference type="GO" id="GO:0055129">
    <property type="term" value="P:L-proline biosynthetic process"/>
    <property type="evidence" value="ECO:0007669"/>
    <property type="project" value="UniProtKB-UniRule"/>
</dbReference>
<dbReference type="CDD" id="cd04242">
    <property type="entry name" value="AAK_G5K_ProB"/>
    <property type="match status" value="1"/>
</dbReference>
<dbReference type="CDD" id="cd21157">
    <property type="entry name" value="PUA_G5K"/>
    <property type="match status" value="1"/>
</dbReference>
<dbReference type="FunFam" id="2.30.130.10:FF:000003">
    <property type="entry name" value="Glutamate 5-kinase"/>
    <property type="match status" value="1"/>
</dbReference>
<dbReference type="FunFam" id="3.40.1160.10:FF:000006">
    <property type="entry name" value="Glutamate 5-kinase"/>
    <property type="match status" value="1"/>
</dbReference>
<dbReference type="Gene3D" id="3.40.1160.10">
    <property type="entry name" value="Acetylglutamate kinase-like"/>
    <property type="match status" value="2"/>
</dbReference>
<dbReference type="Gene3D" id="2.30.130.10">
    <property type="entry name" value="PUA domain"/>
    <property type="match status" value="1"/>
</dbReference>
<dbReference type="HAMAP" id="MF_00456">
    <property type="entry name" value="ProB"/>
    <property type="match status" value="1"/>
</dbReference>
<dbReference type="InterPro" id="IPR036393">
    <property type="entry name" value="AceGlu_kinase-like_sf"/>
</dbReference>
<dbReference type="InterPro" id="IPR001048">
    <property type="entry name" value="Asp/Glu/Uridylate_kinase"/>
</dbReference>
<dbReference type="InterPro" id="IPR041739">
    <property type="entry name" value="G5K_ProB"/>
</dbReference>
<dbReference type="InterPro" id="IPR001057">
    <property type="entry name" value="Glu/AcGlu_kinase"/>
</dbReference>
<dbReference type="InterPro" id="IPR011529">
    <property type="entry name" value="Glu_5kinase"/>
</dbReference>
<dbReference type="InterPro" id="IPR005715">
    <property type="entry name" value="Glu_5kinase/COase_Synthase"/>
</dbReference>
<dbReference type="InterPro" id="IPR019797">
    <property type="entry name" value="Glutamate_5-kinase_CS"/>
</dbReference>
<dbReference type="InterPro" id="IPR002478">
    <property type="entry name" value="PUA"/>
</dbReference>
<dbReference type="InterPro" id="IPR015947">
    <property type="entry name" value="PUA-like_sf"/>
</dbReference>
<dbReference type="InterPro" id="IPR036974">
    <property type="entry name" value="PUA_sf"/>
</dbReference>
<dbReference type="NCBIfam" id="TIGR01027">
    <property type="entry name" value="proB"/>
    <property type="match status" value="1"/>
</dbReference>
<dbReference type="PANTHER" id="PTHR43654">
    <property type="entry name" value="GLUTAMATE 5-KINASE"/>
    <property type="match status" value="1"/>
</dbReference>
<dbReference type="PANTHER" id="PTHR43654:SF1">
    <property type="entry name" value="ISOPENTENYL PHOSPHATE KINASE"/>
    <property type="match status" value="1"/>
</dbReference>
<dbReference type="Pfam" id="PF00696">
    <property type="entry name" value="AA_kinase"/>
    <property type="match status" value="1"/>
</dbReference>
<dbReference type="Pfam" id="PF01472">
    <property type="entry name" value="PUA"/>
    <property type="match status" value="1"/>
</dbReference>
<dbReference type="PIRSF" id="PIRSF000729">
    <property type="entry name" value="GK"/>
    <property type="match status" value="1"/>
</dbReference>
<dbReference type="PRINTS" id="PR00474">
    <property type="entry name" value="GLU5KINASE"/>
</dbReference>
<dbReference type="SMART" id="SM00359">
    <property type="entry name" value="PUA"/>
    <property type="match status" value="1"/>
</dbReference>
<dbReference type="SUPFAM" id="SSF53633">
    <property type="entry name" value="Carbamate kinase-like"/>
    <property type="match status" value="1"/>
</dbReference>
<dbReference type="SUPFAM" id="SSF88697">
    <property type="entry name" value="PUA domain-like"/>
    <property type="match status" value="1"/>
</dbReference>
<dbReference type="PROSITE" id="PS00902">
    <property type="entry name" value="GLUTAMATE_5_KINASE"/>
    <property type="match status" value="1"/>
</dbReference>
<dbReference type="PROSITE" id="PS50890">
    <property type="entry name" value="PUA"/>
    <property type="match status" value="1"/>
</dbReference>
<feature type="chain" id="PRO_0000109723" description="Glutamate 5-kinase">
    <location>
        <begin position="1"/>
        <end position="367"/>
    </location>
</feature>
<feature type="domain" description="PUA" evidence="1">
    <location>
        <begin position="275"/>
        <end position="353"/>
    </location>
</feature>
<feature type="binding site" evidence="1">
    <location>
        <position position="10"/>
    </location>
    <ligand>
        <name>ATP</name>
        <dbReference type="ChEBI" id="CHEBI:30616"/>
    </ligand>
</feature>
<feature type="binding site" evidence="1">
    <location>
        <position position="50"/>
    </location>
    <ligand>
        <name>substrate</name>
    </ligand>
</feature>
<feature type="binding site" evidence="1">
    <location>
        <position position="137"/>
    </location>
    <ligand>
        <name>substrate</name>
    </ligand>
</feature>
<feature type="binding site" evidence="1">
    <location>
        <position position="149"/>
    </location>
    <ligand>
        <name>substrate</name>
    </ligand>
</feature>
<feature type="binding site" evidence="1">
    <location>
        <begin position="169"/>
        <end position="170"/>
    </location>
    <ligand>
        <name>ATP</name>
        <dbReference type="ChEBI" id="CHEBI:30616"/>
    </ligand>
</feature>
<feature type="binding site" evidence="1">
    <location>
        <begin position="211"/>
        <end position="217"/>
    </location>
    <ligand>
        <name>ATP</name>
        <dbReference type="ChEBI" id="CHEBI:30616"/>
    </ligand>
</feature>
<feature type="sequence variant" description="In proline hyperproducing mutant; 700-X less sensitive to proline inhibition.">
    <original>A</original>
    <variation>V</variation>
    <location>
        <position position="117"/>
    </location>
</feature>
<organism>
    <name type="scientific">Serratia marcescens</name>
    <dbReference type="NCBI Taxonomy" id="615"/>
    <lineage>
        <taxon>Bacteria</taxon>
        <taxon>Pseudomonadati</taxon>
        <taxon>Pseudomonadota</taxon>
        <taxon>Gammaproteobacteria</taxon>
        <taxon>Enterobacterales</taxon>
        <taxon>Yersiniaceae</taxon>
        <taxon>Serratia</taxon>
    </lineage>
</organism>
<keyword id="KW-0028">Amino-acid biosynthesis</keyword>
<keyword id="KW-0067">ATP-binding</keyword>
<keyword id="KW-0963">Cytoplasm</keyword>
<keyword id="KW-0418">Kinase</keyword>
<keyword id="KW-0547">Nucleotide-binding</keyword>
<keyword id="KW-0641">Proline biosynthesis</keyword>
<keyword id="KW-0808">Transferase</keyword>
<protein>
    <recommendedName>
        <fullName evidence="1">Glutamate 5-kinase</fullName>
        <ecNumber evidence="1">2.7.2.11</ecNumber>
    </recommendedName>
    <alternativeName>
        <fullName evidence="1">Gamma-glutamyl kinase</fullName>
        <shortName evidence="1">GK</shortName>
    </alternativeName>
</protein>
<gene>
    <name evidence="1" type="primary">proB</name>
</gene>
<comment type="function">
    <text evidence="1">Catalyzes the transfer of a phosphate group to glutamate to form L-glutamate 5-phosphate.</text>
</comment>
<comment type="catalytic activity">
    <reaction evidence="1">
        <text>L-glutamate + ATP = L-glutamyl 5-phosphate + ADP</text>
        <dbReference type="Rhea" id="RHEA:14877"/>
        <dbReference type="ChEBI" id="CHEBI:29985"/>
        <dbReference type="ChEBI" id="CHEBI:30616"/>
        <dbReference type="ChEBI" id="CHEBI:58274"/>
        <dbReference type="ChEBI" id="CHEBI:456216"/>
        <dbReference type="EC" id="2.7.2.11"/>
    </reaction>
</comment>
<comment type="activity regulation">
    <text>Proline-mediated feedback inhibition.</text>
</comment>
<comment type="pathway">
    <text evidence="1">Amino-acid biosynthesis; L-proline biosynthesis; L-glutamate 5-semialdehyde from L-glutamate: step 1/2.</text>
</comment>
<comment type="subcellular location">
    <subcellularLocation>
        <location evidence="1">Cytoplasm</location>
    </subcellularLocation>
</comment>
<comment type="similarity">
    <text evidence="1">Belongs to the glutamate 5-kinase family.</text>
</comment>
<evidence type="ECO:0000255" key="1">
    <source>
        <dbReference type="HAMAP-Rule" id="MF_00456"/>
    </source>
</evidence>
<sequence length="367" mass="39170">MNGSQTLVVKLGTSVLTGGSLRLNRAHIVELVRQCAQQHAAGHRIVIVTSGAIAAGREHLGYPELPATIASKQLLAAVGQSRLIQLWEQLFSIYGIHVGQMLLTRADLEDRERFLNARDTMTALLDNRIVPVINENDAVATAEIKVGDNDNLSALAAILAGADKLLLLTDQQGLYTADPRNNPQAELIREVHGIDDALRAIAGDSVSGLGTGGMGTKLQAADVACRAGIDVVIAAGSKPGVVADVIEGKPVGTRFHALETPLENRKRWIFGAPPAGEITVDDGAVEAMMARGSSLLPKGIREVKGDFSRGEVIRIRNLTGRDLAHGVSRYNSDAMRMIAGHHSQEISEILGYEYGPVAVHRDDMIVS</sequence>
<proteinExistence type="inferred from homology"/>
<reference key="1">
    <citation type="journal article" date="1991" name="J. Gen. Microbiol.">
        <title>Analysis of the Serratia marcescens proBA operon and feedback control of proline biosynthesis.</title>
        <authorList>
            <person name="Omori K."/>
            <person name="Suzuki S."/>
            <person name="Imai Y."/>
            <person name="Komatsubara S."/>
        </authorList>
    </citation>
    <scope>NUCLEOTIDE SEQUENCE [GENOMIC DNA]</scope>
    <source>
        <strain>Sr41</strain>
    </source>
</reference>
<reference key="2">
    <citation type="journal article" date="1992" name="J. Gen. Microbiol.">
        <title>Analysis of the mutant proBA operon from a proline-producing strain of Serratia marcescens.</title>
        <authorList>
            <person name="Omori K."/>
            <person name="Suzuki S."/>
            <person name="Imai Y."/>
            <person name="Komatsubara S."/>
        </authorList>
    </citation>
    <scope>MUTANT</scope>
</reference>
<name>PROB_SERMA</name>
<accession>P17856</accession>